<feature type="chain" id="PRO_0000376210" description="NADH-quinone oxidoreductase subunit B">
    <location>
        <begin position="1"/>
        <end position="220"/>
    </location>
</feature>
<feature type="binding site" evidence="1">
    <location>
        <position position="63"/>
    </location>
    <ligand>
        <name>[4Fe-4S] cluster</name>
        <dbReference type="ChEBI" id="CHEBI:49883"/>
    </ligand>
</feature>
<feature type="binding site" evidence="1">
    <location>
        <position position="64"/>
    </location>
    <ligand>
        <name>[4Fe-4S] cluster</name>
        <dbReference type="ChEBI" id="CHEBI:49883"/>
    </ligand>
</feature>
<feature type="binding site" evidence="1">
    <location>
        <position position="129"/>
    </location>
    <ligand>
        <name>[4Fe-4S] cluster</name>
        <dbReference type="ChEBI" id="CHEBI:49883"/>
    </ligand>
</feature>
<feature type="binding site" evidence="1">
    <location>
        <position position="158"/>
    </location>
    <ligand>
        <name>[4Fe-4S] cluster</name>
        <dbReference type="ChEBI" id="CHEBI:49883"/>
    </ligand>
</feature>
<comment type="function">
    <text evidence="1">NDH-1 shuttles electrons from NADH, via FMN and iron-sulfur (Fe-S) centers, to quinones in the respiratory chain. The immediate electron acceptor for the enzyme in this species is believed to be ubiquinone. Couples the redox reaction to proton translocation (for every two electrons transferred, four hydrogen ions are translocated across the cytoplasmic membrane), and thus conserves the redox energy in a proton gradient.</text>
</comment>
<comment type="catalytic activity">
    <reaction evidence="1">
        <text>a quinone + NADH + 5 H(+)(in) = a quinol + NAD(+) + 4 H(+)(out)</text>
        <dbReference type="Rhea" id="RHEA:57888"/>
        <dbReference type="ChEBI" id="CHEBI:15378"/>
        <dbReference type="ChEBI" id="CHEBI:24646"/>
        <dbReference type="ChEBI" id="CHEBI:57540"/>
        <dbReference type="ChEBI" id="CHEBI:57945"/>
        <dbReference type="ChEBI" id="CHEBI:132124"/>
    </reaction>
</comment>
<comment type="cofactor">
    <cofactor evidence="1">
        <name>[4Fe-4S] cluster</name>
        <dbReference type="ChEBI" id="CHEBI:49883"/>
    </cofactor>
    <text evidence="1">Binds 1 [4Fe-4S] cluster.</text>
</comment>
<comment type="subunit">
    <text evidence="1">NDH-1 is composed of 13 different subunits. Subunits NuoB, CD, E, F, and G constitute the peripheral sector of the complex.</text>
</comment>
<comment type="subcellular location">
    <subcellularLocation>
        <location evidence="1">Cell inner membrane</location>
        <topology evidence="1">Peripheral membrane protein</topology>
        <orientation evidence="1">Cytoplasmic side</orientation>
    </subcellularLocation>
</comment>
<comment type="similarity">
    <text evidence="1">Belongs to the complex I 20 kDa subunit family.</text>
</comment>
<reference key="1">
    <citation type="journal article" date="2008" name="J. Bacteriol.">
        <title>Insights into the environmental resistance gene pool from the genome sequence of the multidrug-resistant environmental isolate Escherichia coli SMS-3-5.</title>
        <authorList>
            <person name="Fricke W.F."/>
            <person name="Wright M.S."/>
            <person name="Lindell A.H."/>
            <person name="Harkins D.M."/>
            <person name="Baker-Austin C."/>
            <person name="Ravel J."/>
            <person name="Stepanauskas R."/>
        </authorList>
    </citation>
    <scope>NUCLEOTIDE SEQUENCE [LARGE SCALE GENOMIC DNA]</scope>
    <source>
        <strain>SMS-3-5 / SECEC</strain>
    </source>
</reference>
<evidence type="ECO:0000255" key="1">
    <source>
        <dbReference type="HAMAP-Rule" id="MF_01356"/>
    </source>
</evidence>
<proteinExistence type="inferred from homology"/>
<gene>
    <name evidence="1" type="primary">nuoB</name>
    <name type="ordered locus">EcSMS35_2441</name>
</gene>
<protein>
    <recommendedName>
        <fullName evidence="1">NADH-quinone oxidoreductase subunit B</fullName>
        <ecNumber evidence="1">7.1.1.-</ecNumber>
    </recommendedName>
    <alternativeName>
        <fullName evidence="1">NADH dehydrogenase I subunit B</fullName>
    </alternativeName>
    <alternativeName>
        <fullName evidence="1">NDH-1 subunit B</fullName>
    </alternativeName>
</protein>
<name>NUOB_ECOSM</name>
<keyword id="KW-0004">4Fe-4S</keyword>
<keyword id="KW-0997">Cell inner membrane</keyword>
<keyword id="KW-1003">Cell membrane</keyword>
<keyword id="KW-0408">Iron</keyword>
<keyword id="KW-0411">Iron-sulfur</keyword>
<keyword id="KW-0472">Membrane</keyword>
<keyword id="KW-0479">Metal-binding</keyword>
<keyword id="KW-0520">NAD</keyword>
<keyword id="KW-0874">Quinone</keyword>
<keyword id="KW-1278">Translocase</keyword>
<keyword id="KW-0813">Transport</keyword>
<keyword id="KW-0830">Ubiquinone</keyword>
<sequence>MDYTLTRIDPNGENDRYPLQKQEIVTDPLEQEVNKNVFMGKLNDMVNWGRKNSIWPYNFGLSCCYVEMVTSFTAVHDVARFGAEVLRASPRQADLMVVAGTCFTKMAPVIQRLYDQMLEPKWVISMGACANSGGMYDIYSVVQGVDKFIPVDVYIPGCPPRPEAYMQALMLLQESIGKERRPLSWVVGDQGVYRANMQSERERKRGERIAVTNLRTPDEI</sequence>
<dbReference type="EC" id="7.1.1.-" evidence="1"/>
<dbReference type="EMBL" id="CP000970">
    <property type="protein sequence ID" value="ACB16961.1"/>
    <property type="molecule type" value="Genomic_DNA"/>
</dbReference>
<dbReference type="RefSeq" id="WP_000386733.1">
    <property type="nucleotide sequence ID" value="NC_010498.1"/>
</dbReference>
<dbReference type="SMR" id="B1LLP0"/>
<dbReference type="GeneID" id="93774887"/>
<dbReference type="KEGG" id="ecm:EcSMS35_2441"/>
<dbReference type="HOGENOM" id="CLU_055737_7_3_6"/>
<dbReference type="Proteomes" id="UP000007011">
    <property type="component" value="Chromosome"/>
</dbReference>
<dbReference type="GO" id="GO:0005886">
    <property type="term" value="C:plasma membrane"/>
    <property type="evidence" value="ECO:0007669"/>
    <property type="project" value="UniProtKB-SubCell"/>
</dbReference>
<dbReference type="GO" id="GO:0045271">
    <property type="term" value="C:respiratory chain complex I"/>
    <property type="evidence" value="ECO:0007669"/>
    <property type="project" value="TreeGrafter"/>
</dbReference>
<dbReference type="GO" id="GO:0051539">
    <property type="term" value="F:4 iron, 4 sulfur cluster binding"/>
    <property type="evidence" value="ECO:0007669"/>
    <property type="project" value="UniProtKB-KW"/>
</dbReference>
<dbReference type="GO" id="GO:0005506">
    <property type="term" value="F:iron ion binding"/>
    <property type="evidence" value="ECO:0007669"/>
    <property type="project" value="UniProtKB-UniRule"/>
</dbReference>
<dbReference type="GO" id="GO:0008137">
    <property type="term" value="F:NADH dehydrogenase (ubiquinone) activity"/>
    <property type="evidence" value="ECO:0007669"/>
    <property type="project" value="InterPro"/>
</dbReference>
<dbReference type="GO" id="GO:0050136">
    <property type="term" value="F:NADH:ubiquinone reductase (non-electrogenic) activity"/>
    <property type="evidence" value="ECO:0007669"/>
    <property type="project" value="UniProtKB-UniRule"/>
</dbReference>
<dbReference type="GO" id="GO:0048038">
    <property type="term" value="F:quinone binding"/>
    <property type="evidence" value="ECO:0007669"/>
    <property type="project" value="UniProtKB-KW"/>
</dbReference>
<dbReference type="GO" id="GO:0009060">
    <property type="term" value="P:aerobic respiration"/>
    <property type="evidence" value="ECO:0007669"/>
    <property type="project" value="TreeGrafter"/>
</dbReference>
<dbReference type="GO" id="GO:0015990">
    <property type="term" value="P:electron transport coupled proton transport"/>
    <property type="evidence" value="ECO:0007669"/>
    <property type="project" value="TreeGrafter"/>
</dbReference>
<dbReference type="FunFam" id="3.40.50.12280:FF:000002">
    <property type="entry name" value="NADH-quinone oxidoreductase subunit B"/>
    <property type="match status" value="1"/>
</dbReference>
<dbReference type="Gene3D" id="3.40.50.12280">
    <property type="match status" value="1"/>
</dbReference>
<dbReference type="HAMAP" id="MF_01356">
    <property type="entry name" value="NDH1_NuoB"/>
    <property type="match status" value="1"/>
</dbReference>
<dbReference type="InterPro" id="IPR006137">
    <property type="entry name" value="NADH_UbQ_OxRdtase-like_20kDa"/>
</dbReference>
<dbReference type="InterPro" id="IPR006138">
    <property type="entry name" value="NADH_UQ_OxRdtase_20Kd_su"/>
</dbReference>
<dbReference type="NCBIfam" id="TIGR01957">
    <property type="entry name" value="nuoB_fam"/>
    <property type="match status" value="1"/>
</dbReference>
<dbReference type="NCBIfam" id="NF005012">
    <property type="entry name" value="PRK06411.1"/>
    <property type="match status" value="1"/>
</dbReference>
<dbReference type="PANTHER" id="PTHR11995">
    <property type="entry name" value="NADH DEHYDROGENASE"/>
    <property type="match status" value="1"/>
</dbReference>
<dbReference type="PANTHER" id="PTHR11995:SF14">
    <property type="entry name" value="NADH DEHYDROGENASE [UBIQUINONE] IRON-SULFUR PROTEIN 7, MITOCHONDRIAL"/>
    <property type="match status" value="1"/>
</dbReference>
<dbReference type="Pfam" id="PF01058">
    <property type="entry name" value="Oxidored_q6"/>
    <property type="match status" value="1"/>
</dbReference>
<dbReference type="SUPFAM" id="SSF56770">
    <property type="entry name" value="HydA/Nqo6-like"/>
    <property type="match status" value="1"/>
</dbReference>
<dbReference type="PROSITE" id="PS01150">
    <property type="entry name" value="COMPLEX1_20K"/>
    <property type="match status" value="1"/>
</dbReference>
<organism>
    <name type="scientific">Escherichia coli (strain SMS-3-5 / SECEC)</name>
    <dbReference type="NCBI Taxonomy" id="439855"/>
    <lineage>
        <taxon>Bacteria</taxon>
        <taxon>Pseudomonadati</taxon>
        <taxon>Pseudomonadota</taxon>
        <taxon>Gammaproteobacteria</taxon>
        <taxon>Enterobacterales</taxon>
        <taxon>Enterobacteriaceae</taxon>
        <taxon>Escherichia</taxon>
    </lineage>
</organism>
<accession>B1LLP0</accession>